<evidence type="ECO:0000255" key="1">
    <source>
        <dbReference type="HAMAP-Rule" id="MF_00473"/>
    </source>
</evidence>
<keyword id="KW-0963">Cytoplasm</keyword>
<keyword id="KW-0312">Gluconeogenesis</keyword>
<keyword id="KW-0324">Glycolysis</keyword>
<keyword id="KW-0413">Isomerase</keyword>
<keyword id="KW-0597">Phosphoprotein</keyword>
<gene>
    <name evidence="1" type="primary">pgi</name>
    <name type="ordered locus">BCB4264_A5030</name>
</gene>
<dbReference type="EC" id="5.3.1.9" evidence="1"/>
<dbReference type="EMBL" id="CP001176">
    <property type="protein sequence ID" value="ACK62205.1"/>
    <property type="molecule type" value="Genomic_DNA"/>
</dbReference>
<dbReference type="RefSeq" id="WP_000103654.1">
    <property type="nucleotide sequence ID" value="NZ_VEHB01000022.1"/>
</dbReference>
<dbReference type="SMR" id="B7HBD4"/>
<dbReference type="KEGG" id="bcb:BCB4264_A5030"/>
<dbReference type="HOGENOM" id="CLU_037303_0_1_9"/>
<dbReference type="UniPathway" id="UPA00109">
    <property type="reaction ID" value="UER00181"/>
</dbReference>
<dbReference type="UniPathway" id="UPA00138"/>
<dbReference type="Proteomes" id="UP000007096">
    <property type="component" value="Chromosome"/>
</dbReference>
<dbReference type="GO" id="GO:0005829">
    <property type="term" value="C:cytosol"/>
    <property type="evidence" value="ECO:0007669"/>
    <property type="project" value="TreeGrafter"/>
</dbReference>
<dbReference type="GO" id="GO:0097367">
    <property type="term" value="F:carbohydrate derivative binding"/>
    <property type="evidence" value="ECO:0007669"/>
    <property type="project" value="InterPro"/>
</dbReference>
<dbReference type="GO" id="GO:0004347">
    <property type="term" value="F:glucose-6-phosphate isomerase activity"/>
    <property type="evidence" value="ECO:0007669"/>
    <property type="project" value="UniProtKB-UniRule"/>
</dbReference>
<dbReference type="GO" id="GO:0048029">
    <property type="term" value="F:monosaccharide binding"/>
    <property type="evidence" value="ECO:0007669"/>
    <property type="project" value="TreeGrafter"/>
</dbReference>
<dbReference type="GO" id="GO:0006094">
    <property type="term" value="P:gluconeogenesis"/>
    <property type="evidence" value="ECO:0007669"/>
    <property type="project" value="UniProtKB-UniRule"/>
</dbReference>
<dbReference type="GO" id="GO:0051156">
    <property type="term" value="P:glucose 6-phosphate metabolic process"/>
    <property type="evidence" value="ECO:0007669"/>
    <property type="project" value="TreeGrafter"/>
</dbReference>
<dbReference type="GO" id="GO:0006096">
    <property type="term" value="P:glycolytic process"/>
    <property type="evidence" value="ECO:0007669"/>
    <property type="project" value="UniProtKB-UniRule"/>
</dbReference>
<dbReference type="CDD" id="cd05015">
    <property type="entry name" value="SIS_PGI_1"/>
    <property type="match status" value="1"/>
</dbReference>
<dbReference type="CDD" id="cd05016">
    <property type="entry name" value="SIS_PGI_2"/>
    <property type="match status" value="1"/>
</dbReference>
<dbReference type="FunFam" id="3.40.50.10490:FF:000015">
    <property type="entry name" value="Glucose-6-phosphate isomerase"/>
    <property type="match status" value="1"/>
</dbReference>
<dbReference type="FunFam" id="3.40.50.10490:FF:000016">
    <property type="entry name" value="Glucose-6-phosphate isomerase"/>
    <property type="match status" value="1"/>
</dbReference>
<dbReference type="FunFam" id="3.40.50.10490:FF:000020">
    <property type="entry name" value="Glucose-6-phosphate isomerase"/>
    <property type="match status" value="1"/>
</dbReference>
<dbReference type="Gene3D" id="3.40.50.10490">
    <property type="entry name" value="Glucose-6-phosphate isomerase like protein, domain 1"/>
    <property type="match status" value="3"/>
</dbReference>
<dbReference type="HAMAP" id="MF_00473">
    <property type="entry name" value="G6P_isomerase"/>
    <property type="match status" value="1"/>
</dbReference>
<dbReference type="InterPro" id="IPR001672">
    <property type="entry name" value="G6P_Isomerase"/>
</dbReference>
<dbReference type="InterPro" id="IPR018189">
    <property type="entry name" value="Phosphoglucose_isomerase_CS"/>
</dbReference>
<dbReference type="InterPro" id="IPR046348">
    <property type="entry name" value="SIS_dom_sf"/>
</dbReference>
<dbReference type="InterPro" id="IPR035476">
    <property type="entry name" value="SIS_PGI_1"/>
</dbReference>
<dbReference type="InterPro" id="IPR035482">
    <property type="entry name" value="SIS_PGI_2"/>
</dbReference>
<dbReference type="NCBIfam" id="NF010697">
    <property type="entry name" value="PRK14097.1"/>
    <property type="match status" value="1"/>
</dbReference>
<dbReference type="PANTHER" id="PTHR11469">
    <property type="entry name" value="GLUCOSE-6-PHOSPHATE ISOMERASE"/>
    <property type="match status" value="1"/>
</dbReference>
<dbReference type="PANTHER" id="PTHR11469:SF1">
    <property type="entry name" value="GLUCOSE-6-PHOSPHATE ISOMERASE"/>
    <property type="match status" value="1"/>
</dbReference>
<dbReference type="Pfam" id="PF00342">
    <property type="entry name" value="PGI"/>
    <property type="match status" value="1"/>
</dbReference>
<dbReference type="PRINTS" id="PR00662">
    <property type="entry name" value="G6PISOMERASE"/>
</dbReference>
<dbReference type="SUPFAM" id="SSF53697">
    <property type="entry name" value="SIS domain"/>
    <property type="match status" value="1"/>
</dbReference>
<dbReference type="PROSITE" id="PS00765">
    <property type="entry name" value="P_GLUCOSE_ISOMERASE_1"/>
    <property type="match status" value="1"/>
</dbReference>
<dbReference type="PROSITE" id="PS00174">
    <property type="entry name" value="P_GLUCOSE_ISOMERASE_2"/>
    <property type="match status" value="1"/>
</dbReference>
<dbReference type="PROSITE" id="PS51463">
    <property type="entry name" value="P_GLUCOSE_ISOMERASE_3"/>
    <property type="match status" value="1"/>
</dbReference>
<organism>
    <name type="scientific">Bacillus cereus (strain B4264)</name>
    <dbReference type="NCBI Taxonomy" id="405532"/>
    <lineage>
        <taxon>Bacteria</taxon>
        <taxon>Bacillati</taxon>
        <taxon>Bacillota</taxon>
        <taxon>Bacilli</taxon>
        <taxon>Bacillales</taxon>
        <taxon>Bacillaceae</taxon>
        <taxon>Bacillus</taxon>
        <taxon>Bacillus cereus group</taxon>
    </lineage>
</organism>
<proteinExistence type="inferred from homology"/>
<feature type="chain" id="PRO_1000125693" description="Glucose-6-phosphate isomerase">
    <location>
        <begin position="1"/>
        <end position="450"/>
    </location>
</feature>
<feature type="active site" description="Proton donor" evidence="1">
    <location>
        <position position="291"/>
    </location>
</feature>
<feature type="active site" evidence="1">
    <location>
        <position position="312"/>
    </location>
</feature>
<feature type="active site" evidence="1">
    <location>
        <position position="426"/>
    </location>
</feature>
<feature type="modified residue" description="Phosphothreonine" evidence="1">
    <location>
        <position position="39"/>
    </location>
</feature>
<sequence length="450" mass="50312">MSTHVTFDYSKALSFIGEHEITYLRDAVKVTHHAIHEKTGAGNDFLGWVDLPLQYDKEEFARIQKCAEKIKNDSDILLVVGIGGSYLGARAAIEMLNHSFYNTLSKEQRKTPQVLFVGQNISSTYMKDLMDVLEGKDFSINVISKSGTTTEPALAFRIFRKLLEEKYGKEEARKRIYATTDKARGALKTLADNEGYETFVIPDDVGGRFSVLTPVGLLPIAVSGLNIEEMMKGAAAGHDDFGTSELEENPAYQYAVVRNALYNKGKTIEMLVNYEPALQYFAEWWKQLFGESEGKDQKGIFPSSANFSTDLHSLGQYVQEGRRDLFETVLKVGKSTHELTIESEENDLDGLNYLAGETVDFVNTKAYEGTLLAHSDGGVPNLIVNIPELNEYTFGYLVYFFEKACAMSGYLLGVNPFDQPGVEAYKKNMFALLGKPGFEELKAELEERLK</sequence>
<accession>B7HBD4</accession>
<comment type="function">
    <text evidence="1">Catalyzes the reversible isomerization of glucose-6-phosphate to fructose-6-phosphate.</text>
</comment>
<comment type="catalytic activity">
    <reaction evidence="1">
        <text>alpha-D-glucose 6-phosphate = beta-D-fructose 6-phosphate</text>
        <dbReference type="Rhea" id="RHEA:11816"/>
        <dbReference type="ChEBI" id="CHEBI:57634"/>
        <dbReference type="ChEBI" id="CHEBI:58225"/>
        <dbReference type="EC" id="5.3.1.9"/>
    </reaction>
</comment>
<comment type="pathway">
    <text evidence="1">Carbohydrate biosynthesis; gluconeogenesis.</text>
</comment>
<comment type="pathway">
    <text evidence="1">Carbohydrate degradation; glycolysis; D-glyceraldehyde 3-phosphate and glycerone phosphate from D-glucose: step 2/4.</text>
</comment>
<comment type="subcellular location">
    <subcellularLocation>
        <location evidence="1">Cytoplasm</location>
    </subcellularLocation>
</comment>
<comment type="similarity">
    <text evidence="1">Belongs to the GPI family.</text>
</comment>
<name>G6PI_BACC4</name>
<protein>
    <recommendedName>
        <fullName evidence="1">Glucose-6-phosphate isomerase</fullName>
        <shortName evidence="1">GPI</shortName>
        <ecNumber evidence="1">5.3.1.9</ecNumber>
    </recommendedName>
    <alternativeName>
        <fullName evidence="1">Phosphoglucose isomerase</fullName>
        <shortName evidence="1">PGI</shortName>
    </alternativeName>
    <alternativeName>
        <fullName evidence="1">Phosphohexose isomerase</fullName>
        <shortName evidence="1">PHI</shortName>
    </alternativeName>
</protein>
<reference key="1">
    <citation type="submission" date="2008-10" db="EMBL/GenBank/DDBJ databases">
        <title>Genome sequence of Bacillus cereus B4264.</title>
        <authorList>
            <person name="Dodson R.J."/>
            <person name="Durkin A.S."/>
            <person name="Rosovitz M.J."/>
            <person name="Rasko D.A."/>
            <person name="Hoffmaster A."/>
            <person name="Ravel J."/>
            <person name="Sutton G."/>
        </authorList>
    </citation>
    <scope>NUCLEOTIDE SEQUENCE [LARGE SCALE GENOMIC DNA]</scope>
    <source>
        <strain>B4264</strain>
    </source>
</reference>